<dbReference type="EC" id="4.2.2.n1" evidence="1"/>
<dbReference type="EMBL" id="CP000057">
    <property type="protein sequence ID" value="AAX87293.1"/>
    <property type="status" value="ALT_INIT"/>
    <property type="molecule type" value="Genomic_DNA"/>
</dbReference>
<dbReference type="RefSeq" id="WP_038440844.1">
    <property type="nucleotide sequence ID" value="NC_007146.2"/>
</dbReference>
<dbReference type="SMR" id="Q4QNV4"/>
<dbReference type="CAZy" id="GH23">
    <property type="family name" value="Glycoside Hydrolase Family 23"/>
</dbReference>
<dbReference type="GeneID" id="93219175"/>
<dbReference type="KEGG" id="hit:NTHI0338"/>
<dbReference type="HOGENOM" id="CLU_027494_0_1_6"/>
<dbReference type="Proteomes" id="UP000002525">
    <property type="component" value="Chromosome"/>
</dbReference>
<dbReference type="GO" id="GO:0009279">
    <property type="term" value="C:cell outer membrane"/>
    <property type="evidence" value="ECO:0007669"/>
    <property type="project" value="UniProtKB-SubCell"/>
</dbReference>
<dbReference type="GO" id="GO:0008933">
    <property type="term" value="F:peptidoglycan lytic transglycosylase activity"/>
    <property type="evidence" value="ECO:0007669"/>
    <property type="project" value="UniProtKB-UniRule"/>
</dbReference>
<dbReference type="GO" id="GO:0016998">
    <property type="term" value="P:cell wall macromolecule catabolic process"/>
    <property type="evidence" value="ECO:0007669"/>
    <property type="project" value="UniProtKB-UniRule"/>
</dbReference>
<dbReference type="GO" id="GO:0071555">
    <property type="term" value="P:cell wall organization"/>
    <property type="evidence" value="ECO:0007669"/>
    <property type="project" value="UniProtKB-KW"/>
</dbReference>
<dbReference type="GO" id="GO:0009253">
    <property type="term" value="P:peptidoglycan catabolic process"/>
    <property type="evidence" value="ECO:0007669"/>
    <property type="project" value="TreeGrafter"/>
</dbReference>
<dbReference type="CDD" id="cd13403">
    <property type="entry name" value="MLTF-like"/>
    <property type="match status" value="1"/>
</dbReference>
<dbReference type="CDD" id="cd01009">
    <property type="entry name" value="PBP2_YfhD_N"/>
    <property type="match status" value="1"/>
</dbReference>
<dbReference type="FunFam" id="1.10.530.10:FF:000003">
    <property type="entry name" value="Membrane-bound lytic murein transglycosylase F"/>
    <property type="match status" value="1"/>
</dbReference>
<dbReference type="Gene3D" id="1.10.530.10">
    <property type="match status" value="1"/>
</dbReference>
<dbReference type="Gene3D" id="3.40.190.10">
    <property type="entry name" value="Periplasmic binding protein-like II"/>
    <property type="match status" value="2"/>
</dbReference>
<dbReference type="HAMAP" id="MF_02016">
    <property type="entry name" value="MltF"/>
    <property type="match status" value="1"/>
</dbReference>
<dbReference type="InterPro" id="IPR023346">
    <property type="entry name" value="Lysozyme-like_dom_sf"/>
</dbReference>
<dbReference type="InterPro" id="IPR023703">
    <property type="entry name" value="MltF"/>
</dbReference>
<dbReference type="InterPro" id="IPR001638">
    <property type="entry name" value="Solute-binding_3/MltF_N"/>
</dbReference>
<dbReference type="InterPro" id="IPR000189">
    <property type="entry name" value="Transglyc_AS"/>
</dbReference>
<dbReference type="InterPro" id="IPR008258">
    <property type="entry name" value="Transglycosylase_SLT_dom_1"/>
</dbReference>
<dbReference type="NCBIfam" id="NF008112">
    <property type="entry name" value="PRK10859.1"/>
    <property type="match status" value="1"/>
</dbReference>
<dbReference type="PANTHER" id="PTHR35936">
    <property type="entry name" value="MEMBRANE-BOUND LYTIC MUREIN TRANSGLYCOSYLASE F"/>
    <property type="match status" value="1"/>
</dbReference>
<dbReference type="PANTHER" id="PTHR35936:SF32">
    <property type="entry name" value="MEMBRANE-BOUND LYTIC MUREIN TRANSGLYCOSYLASE F"/>
    <property type="match status" value="1"/>
</dbReference>
<dbReference type="Pfam" id="PF00497">
    <property type="entry name" value="SBP_bac_3"/>
    <property type="match status" value="1"/>
</dbReference>
<dbReference type="Pfam" id="PF01464">
    <property type="entry name" value="SLT"/>
    <property type="match status" value="1"/>
</dbReference>
<dbReference type="SMART" id="SM00062">
    <property type="entry name" value="PBPb"/>
    <property type="match status" value="1"/>
</dbReference>
<dbReference type="SUPFAM" id="SSF53955">
    <property type="entry name" value="Lysozyme-like"/>
    <property type="match status" value="1"/>
</dbReference>
<dbReference type="SUPFAM" id="SSF53850">
    <property type="entry name" value="Periplasmic binding protein-like II"/>
    <property type="match status" value="1"/>
</dbReference>
<dbReference type="PROSITE" id="PS00922">
    <property type="entry name" value="TRANSGLYCOSYLASE"/>
    <property type="match status" value="1"/>
</dbReference>
<name>MLTF_HAEI8</name>
<accession>Q4QNV4</accession>
<proteinExistence type="inferred from homology"/>
<comment type="function">
    <text evidence="1">Murein-degrading enzyme that degrades murein glycan strands and insoluble, high-molecular weight murein sacculi, with the concomitant formation of a 1,6-anhydromuramoyl product. Lytic transglycosylases (LTs) play an integral role in the metabolism of the peptidoglycan (PG) sacculus. Their lytic action creates space within the PG sacculus to allow for its expansion as well as for the insertion of various structures such as secretion systems and flagella.</text>
</comment>
<comment type="catalytic activity">
    <reaction evidence="1">
        <text>Exolytic cleavage of the (1-&gt;4)-beta-glycosidic linkage between N-acetylmuramic acid (MurNAc) and N-acetylglucosamine (GlcNAc) residues in peptidoglycan, from either the reducing or the non-reducing ends of the peptidoglycan chains, with concomitant formation of a 1,6-anhydrobond in the MurNAc residue.</text>
        <dbReference type="EC" id="4.2.2.n1"/>
    </reaction>
</comment>
<comment type="subcellular location">
    <subcellularLocation>
        <location>Cell outer membrane</location>
        <topology>Peripheral membrane protein</topology>
    </subcellularLocation>
    <text evidence="1">Attached to the inner leaflet of the outer membrane.</text>
</comment>
<comment type="domain">
    <text evidence="1">The N-terminal domain does not have lytic activity and probably modulates enzymatic activity. The C-terminal domain is the catalytic active domain.</text>
</comment>
<comment type="similarity">
    <text evidence="1">In the N-terminal section; belongs to the bacterial solute-binding protein 3 family.</text>
</comment>
<comment type="similarity">
    <text evidence="1">In the C-terminal section; belongs to the transglycosylase Slt family.</text>
</comment>
<comment type="sequence caution" evidence="3">
    <conflict type="erroneous initiation">
        <sequence resource="EMBL-CDS" id="AAX87293"/>
    </conflict>
</comment>
<protein>
    <recommendedName>
        <fullName evidence="1">Membrane-bound lytic murein transglycosylase F</fullName>
        <ecNumber evidence="1">4.2.2.n1</ecNumber>
    </recommendedName>
    <alternativeName>
        <fullName evidence="1">Murein lyase F</fullName>
    </alternativeName>
</protein>
<feature type="signal peptide" evidence="1">
    <location>
        <begin position="1"/>
        <end position="18"/>
    </location>
</feature>
<feature type="chain" id="PRO_0000353940" description="Membrane-bound lytic murein transglycosylase F">
    <location>
        <begin position="19"/>
        <end position="482"/>
    </location>
</feature>
<feature type="region of interest" description="Non-LT domain" evidence="1">
    <location>
        <begin position="19"/>
        <end position="267"/>
    </location>
</feature>
<feature type="region of interest" description="LT domain" evidence="1">
    <location>
        <begin position="268"/>
        <end position="482"/>
    </location>
</feature>
<feature type="region of interest" description="Disordered" evidence="2">
    <location>
        <begin position="457"/>
        <end position="482"/>
    </location>
</feature>
<feature type="compositionally biased region" description="Polar residues" evidence="2">
    <location>
        <begin position="457"/>
        <end position="470"/>
    </location>
</feature>
<feature type="compositionally biased region" description="Basic and acidic residues" evidence="2">
    <location>
        <begin position="473"/>
        <end position="482"/>
    </location>
</feature>
<feature type="active site" evidence="1">
    <location>
        <position position="312"/>
    </location>
</feature>
<sequence>MKGLFLRIITALALLFWAIDMVFPWQFLRHTEENHYTAIQARGSLYVGTINNQISYFINKDSERGFEYELAKAFADTLGVELEMKIFDNQEQLFDELDKHNIDLAAAHLLYHPKNAERFQIGPAYHSASWQLAYRKNENRPKNLGNVKKDIYISNNLALEETLKELQKQYPQLTWKRNQALTQEELLLQLAEGKIPYVIANSIDIAAIQQIKPELAIAFDITDEANVHWYLPNSPYRDLQTALLNFMNNAEETGLLDNLKEKYLGHISQFDYVDTRSYMNAIENTLPQFSPLFEKYKGELDWRLLAAVAYQESHWNPDATSPTGVRGIMMLTKNTAQHMKISDRTDPEQSIKAGSEYLHWLISQLPESIEKEERIWFALVAYNIGLGHLIDARRLTQNLGGNPDNWLNVKKNLPLLAEKRYYSQLKYGYARGYEAYQYVENIRRYMNSIVNYHRVQENQTTNDNANNESAVKNLEEIKENKD</sequence>
<gene>
    <name evidence="1" type="primary">mltF</name>
    <name type="ordered locus">NTHI0338</name>
</gene>
<keyword id="KW-0998">Cell outer membrane</keyword>
<keyword id="KW-0961">Cell wall biogenesis/degradation</keyword>
<keyword id="KW-0456">Lyase</keyword>
<keyword id="KW-0472">Membrane</keyword>
<keyword id="KW-0732">Signal</keyword>
<reference key="1">
    <citation type="journal article" date="2005" name="J. Bacteriol.">
        <title>Genomic sequence of an otitis media isolate of nontypeable Haemophilus influenzae: comparative study with H. influenzae serotype d, strain KW20.</title>
        <authorList>
            <person name="Harrison A."/>
            <person name="Dyer D.W."/>
            <person name="Gillaspy A."/>
            <person name="Ray W.C."/>
            <person name="Mungur R."/>
            <person name="Carson M.B."/>
            <person name="Zhong H."/>
            <person name="Gipson J."/>
            <person name="Gipson M."/>
            <person name="Johnson L.S."/>
            <person name="Lewis L."/>
            <person name="Bakaletz L.O."/>
            <person name="Munson R.S. Jr."/>
        </authorList>
    </citation>
    <scope>NUCLEOTIDE SEQUENCE [LARGE SCALE GENOMIC DNA]</scope>
    <source>
        <strain>86-028NP</strain>
    </source>
</reference>
<evidence type="ECO:0000255" key="1">
    <source>
        <dbReference type="HAMAP-Rule" id="MF_02016"/>
    </source>
</evidence>
<evidence type="ECO:0000256" key="2">
    <source>
        <dbReference type="SAM" id="MobiDB-lite"/>
    </source>
</evidence>
<evidence type="ECO:0000305" key="3"/>
<organism>
    <name type="scientific">Haemophilus influenzae (strain 86-028NP)</name>
    <dbReference type="NCBI Taxonomy" id="281310"/>
    <lineage>
        <taxon>Bacteria</taxon>
        <taxon>Pseudomonadati</taxon>
        <taxon>Pseudomonadota</taxon>
        <taxon>Gammaproteobacteria</taxon>
        <taxon>Pasteurellales</taxon>
        <taxon>Pasteurellaceae</taxon>
        <taxon>Haemophilus</taxon>
    </lineage>
</organism>